<sequence length="222" mass="24381">MSKLGISSLFKTILLTAALAVSFTASAFTEGTDYMVLEKPIPNADKTLIKVFSYACPFCYKYDKAVTGPVSEKVKDIVAFTPFHLETKGEYGKQASEVFAVLINKDKAAGISLFDANSQFKKAKFAYYAAYHDKKERWSDGKDPAAFIKTGLDAAGMSQADFEAALKEPAVQETLEKWKASYDVAKIQGVPAYVVNGKYLIYTKSIKSIDAMADLIRELASK</sequence>
<accession>P0A4L7</accession>
<accession>P97037</accession>
<dbReference type="EMBL" id="AE014075">
    <property type="protein sequence ID" value="AAN82230.1"/>
    <property type="molecule type" value="Genomic_DNA"/>
</dbReference>
<dbReference type="RefSeq" id="WP_000040020.1">
    <property type="nucleotide sequence ID" value="NZ_CP051263.1"/>
</dbReference>
<dbReference type="PDB" id="3C7M">
    <property type="method" value="X-ray"/>
    <property type="resolution" value="1.55 A"/>
    <property type="chains" value="A/B=28-222"/>
</dbReference>
<dbReference type="PDBsum" id="3C7M"/>
<dbReference type="SMR" id="P0A4L7"/>
<dbReference type="STRING" id="199310.c3786"/>
<dbReference type="TCDB" id="5.A.2.1.2">
    <property type="family name" value="the disulfide bond oxidoreductase b (dsbb) family"/>
</dbReference>
<dbReference type="KEGG" id="ecc:c3786"/>
<dbReference type="eggNOG" id="COG2761">
    <property type="taxonomic scope" value="Bacteria"/>
</dbReference>
<dbReference type="HOGENOM" id="CLU_088255_3_1_6"/>
<dbReference type="BioCyc" id="ECOL199310:C3786-MONOMER"/>
<dbReference type="EvolutionaryTrace" id="P0A4L7"/>
<dbReference type="Proteomes" id="UP000001410">
    <property type="component" value="Chromosome"/>
</dbReference>
<dbReference type="GO" id="GO:0042597">
    <property type="term" value="C:periplasmic space"/>
    <property type="evidence" value="ECO:0007669"/>
    <property type="project" value="UniProtKB-SubCell"/>
</dbReference>
<dbReference type="GO" id="GO:0015035">
    <property type="term" value="F:protein-disulfide reductase activity"/>
    <property type="evidence" value="ECO:0007669"/>
    <property type="project" value="UniProtKB-UniRule"/>
</dbReference>
<dbReference type="CDD" id="cd03019">
    <property type="entry name" value="DsbA_DsbA"/>
    <property type="match status" value="1"/>
</dbReference>
<dbReference type="Gene3D" id="3.40.30.10">
    <property type="entry name" value="Glutaredoxin"/>
    <property type="match status" value="1"/>
</dbReference>
<dbReference type="HAMAP" id="MF_00932">
    <property type="entry name" value="DsbL"/>
    <property type="match status" value="1"/>
</dbReference>
<dbReference type="InterPro" id="IPR001853">
    <property type="entry name" value="DSBA-like_thioredoxin_dom"/>
</dbReference>
<dbReference type="InterPro" id="IPR023205">
    <property type="entry name" value="DsbA/DsbL"/>
</dbReference>
<dbReference type="InterPro" id="IPR028588">
    <property type="entry name" value="DsbL"/>
</dbReference>
<dbReference type="InterPro" id="IPR050824">
    <property type="entry name" value="Thiol_disulfide_DsbA"/>
</dbReference>
<dbReference type="InterPro" id="IPR036249">
    <property type="entry name" value="Thioredoxin-like_sf"/>
</dbReference>
<dbReference type="InterPro" id="IPR013766">
    <property type="entry name" value="Thioredoxin_domain"/>
</dbReference>
<dbReference type="PANTHER" id="PTHR35891">
    <property type="entry name" value="THIOL:DISULFIDE INTERCHANGE PROTEIN DSBA"/>
    <property type="match status" value="1"/>
</dbReference>
<dbReference type="PANTHER" id="PTHR35891:SF3">
    <property type="entry name" value="THIOL:DISULFIDE INTERCHANGE PROTEIN DSBL"/>
    <property type="match status" value="1"/>
</dbReference>
<dbReference type="Pfam" id="PF01323">
    <property type="entry name" value="DSBA"/>
    <property type="match status" value="1"/>
</dbReference>
<dbReference type="PIRSF" id="PIRSF001488">
    <property type="entry name" value="Tdi_protein"/>
    <property type="match status" value="1"/>
</dbReference>
<dbReference type="SUPFAM" id="SSF52833">
    <property type="entry name" value="Thioredoxin-like"/>
    <property type="match status" value="1"/>
</dbReference>
<dbReference type="PROSITE" id="PS51352">
    <property type="entry name" value="THIOREDOXIN_2"/>
    <property type="match status" value="1"/>
</dbReference>
<evidence type="ECO:0000255" key="1">
    <source>
        <dbReference type="HAMAP-Rule" id="MF_00932"/>
    </source>
</evidence>
<evidence type="ECO:0000255" key="2">
    <source>
        <dbReference type="PROSITE-ProRule" id="PRU00691"/>
    </source>
</evidence>
<evidence type="ECO:0000269" key="3">
    <source>
    </source>
</evidence>
<evidence type="ECO:0000305" key="4"/>
<evidence type="ECO:0007829" key="5">
    <source>
        <dbReference type="PDB" id="3C7M"/>
    </source>
</evidence>
<gene>
    <name evidence="1" type="primary">dsbL</name>
    <name type="ordered locus">c3786</name>
</gene>
<protein>
    <recommendedName>
        <fullName evidence="1">Thiol:disulfide interchange protein DsbL</fullName>
    </recommendedName>
</protein>
<feature type="signal peptide">
    <location>
        <begin position="1"/>
        <end position="27"/>
    </location>
</feature>
<feature type="chain" id="PRO_0000034255" description="Thiol:disulfide interchange protein DsbL">
    <location>
        <begin position="28"/>
        <end position="222"/>
    </location>
</feature>
<feature type="domain" description="Thioredoxin" evidence="2 4">
    <location>
        <begin position="28"/>
        <end position="221"/>
    </location>
</feature>
<feature type="disulfide bond" description="Redox-active" evidence="2 3">
    <location>
        <begin position="56"/>
        <end position="59"/>
    </location>
</feature>
<feature type="mutagenesis site" description="Loss of activity; when associated with S-59." evidence="3">
    <original>C</original>
    <variation>S</variation>
    <location>
        <position position="56"/>
    </location>
</feature>
<feature type="mutagenesis site" description="Loss of activity; when associated with S-56." evidence="3">
    <original>C</original>
    <variation>S</variation>
    <location>
        <position position="59"/>
    </location>
</feature>
<feature type="turn" evidence="5">
    <location>
        <begin position="30"/>
        <end position="32"/>
    </location>
</feature>
<feature type="strand" evidence="5">
    <location>
        <begin position="33"/>
        <end position="36"/>
    </location>
</feature>
<feature type="strand" evidence="5">
    <location>
        <begin position="47"/>
        <end position="52"/>
    </location>
</feature>
<feature type="helix" evidence="5">
    <location>
        <begin position="57"/>
        <end position="65"/>
    </location>
</feature>
<feature type="helix" evidence="5">
    <location>
        <begin position="67"/>
        <end position="73"/>
    </location>
</feature>
<feature type="turn" evidence="5">
    <location>
        <begin position="74"/>
        <end position="77"/>
    </location>
</feature>
<feature type="strand" evidence="5">
    <location>
        <begin position="79"/>
        <end position="84"/>
    </location>
</feature>
<feature type="helix" evidence="5">
    <location>
        <begin position="92"/>
        <end position="108"/>
    </location>
</feature>
<feature type="helix" evidence="5">
    <location>
        <begin position="119"/>
        <end position="132"/>
    </location>
</feature>
<feature type="turn" evidence="5">
    <location>
        <begin position="138"/>
        <end position="142"/>
    </location>
</feature>
<feature type="helix" evidence="5">
    <location>
        <begin position="144"/>
        <end position="155"/>
    </location>
</feature>
<feature type="helix" evidence="5">
    <location>
        <begin position="159"/>
        <end position="166"/>
    </location>
</feature>
<feature type="helix" evidence="5">
    <location>
        <begin position="169"/>
        <end position="177"/>
    </location>
</feature>
<feature type="helix" evidence="5">
    <location>
        <begin position="178"/>
        <end position="180"/>
    </location>
</feature>
<feature type="helix" evidence="5">
    <location>
        <begin position="181"/>
        <end position="185"/>
    </location>
</feature>
<feature type="turn" evidence="5">
    <location>
        <begin position="186"/>
        <end position="188"/>
    </location>
</feature>
<feature type="strand" evidence="5">
    <location>
        <begin position="190"/>
        <end position="195"/>
    </location>
</feature>
<feature type="turn" evidence="5">
    <location>
        <begin position="196"/>
        <end position="198"/>
    </location>
</feature>
<feature type="strand" evidence="5">
    <location>
        <begin position="199"/>
        <end position="201"/>
    </location>
</feature>
<feature type="helix" evidence="5">
    <location>
        <begin position="203"/>
        <end position="205"/>
    </location>
</feature>
<feature type="helix" evidence="5">
    <location>
        <begin position="209"/>
        <end position="220"/>
    </location>
</feature>
<name>DSBL_ECOL6</name>
<comment type="function">
    <text evidence="1 3">Involved in disulfide-bond formation. Acts by transferring its disulfide bond to other proteins. Part of a redox system composed of DsbI and DsbL that mediates formation of an essential disulfide bond in AssT.</text>
</comment>
<comment type="biophysicochemical properties">
    <redoxPotential>
        <text evidence="3">E(0) is -95 mV.</text>
    </redoxPotential>
</comment>
<comment type="subunit">
    <text evidence="1 3">Interacts with DsbI.</text>
</comment>
<comment type="subcellular location">
    <subcellularLocation>
        <location evidence="1 3">Periplasm</location>
    </subcellularLocation>
</comment>
<comment type="induction">
    <text evidence="3">Expressed from a tri-cistronic operon that encodes AssT, DsbI and DsbL.</text>
</comment>
<comment type="similarity">
    <text evidence="1">Belongs to the thioredoxin family. DsbL subfamily.</text>
</comment>
<keyword id="KW-0002">3D-structure</keyword>
<keyword id="KW-0903">Direct protein sequencing</keyword>
<keyword id="KW-1015">Disulfide bond</keyword>
<keyword id="KW-0574">Periplasm</keyword>
<keyword id="KW-0676">Redox-active center</keyword>
<keyword id="KW-1185">Reference proteome</keyword>
<keyword id="KW-0732">Signal</keyword>
<reference key="1">
    <citation type="journal article" date="2002" name="Proc. Natl. Acad. Sci. U.S.A.">
        <title>Extensive mosaic structure revealed by the complete genome sequence of uropathogenic Escherichia coli.</title>
        <authorList>
            <person name="Welch R.A."/>
            <person name="Burland V."/>
            <person name="Plunkett G. III"/>
            <person name="Redford P."/>
            <person name="Roesch P."/>
            <person name="Rasko D."/>
            <person name="Buckles E.L."/>
            <person name="Liou S.-R."/>
            <person name="Boutin A."/>
            <person name="Hackett J."/>
            <person name="Stroud D."/>
            <person name="Mayhew G.F."/>
            <person name="Rose D.J."/>
            <person name="Zhou S."/>
            <person name="Schwartz D.C."/>
            <person name="Perna N.T."/>
            <person name="Mobley H.L.T."/>
            <person name="Donnenberg M.S."/>
            <person name="Blattner F.R."/>
        </authorList>
    </citation>
    <scope>NUCLEOTIDE SEQUENCE [LARGE SCALE GENOMIC DNA]</scope>
    <source>
        <strain>CFT073 / ATCC 700928 / UPEC</strain>
    </source>
</reference>
<reference key="2">
    <citation type="journal article" date="2008" name="J. Mol. Biol.">
        <title>DsbL and DsbI form a specific dithiol oxidase system for periplasmic arylsulfate sulfotransferase in uropathogenic Escherichia coli.</title>
        <authorList>
            <person name="Grimshaw J.P."/>
            <person name="Stirnimann C.U."/>
            <person name="Brozzo M.S."/>
            <person name="Malojcic G."/>
            <person name="Grutter M.G."/>
            <person name="Capitani G."/>
            <person name="Glockshuber R."/>
        </authorList>
    </citation>
    <scope>X-RAY CRYSTALLOGRAPHY (1.55 ANGSTROMS) OF 28-222</scope>
    <scope>PARTIAL PROTEIN SEQUENCE OF N-TERMINUS</scope>
    <scope>FUNCTION</scope>
    <scope>BIOPHYSICOCHEMICAL PROPERTIES</scope>
    <scope>SUBUNIT</scope>
    <scope>SUBCELLULAR LOCATION</scope>
    <scope>MUTAGENESIS OF CYS-56 AND CYS-59</scope>
    <scope>INDUCTION</scope>
    <scope>DISULFIDE BOND</scope>
    <source>
        <strain>CFT073 / ATCC 700928 / UPEC</strain>
    </source>
</reference>
<proteinExistence type="evidence at protein level"/>
<organism>
    <name type="scientific">Escherichia coli O6:H1 (strain CFT073 / ATCC 700928 / UPEC)</name>
    <dbReference type="NCBI Taxonomy" id="199310"/>
    <lineage>
        <taxon>Bacteria</taxon>
        <taxon>Pseudomonadati</taxon>
        <taxon>Pseudomonadota</taxon>
        <taxon>Gammaproteobacteria</taxon>
        <taxon>Enterobacterales</taxon>
        <taxon>Enterobacteriaceae</taxon>
        <taxon>Escherichia</taxon>
    </lineage>
</organism>